<organism>
    <name type="scientific">Conus marmoreus</name>
    <name type="common">Marble cone</name>
    <dbReference type="NCBI Taxonomy" id="42752"/>
    <lineage>
        <taxon>Eukaryota</taxon>
        <taxon>Metazoa</taxon>
        <taxon>Spiralia</taxon>
        <taxon>Lophotrochozoa</taxon>
        <taxon>Mollusca</taxon>
        <taxon>Gastropoda</taxon>
        <taxon>Caenogastropoda</taxon>
        <taxon>Neogastropoda</taxon>
        <taxon>Conoidea</taxon>
        <taxon>Conidae</taxon>
        <taxon>Conus</taxon>
    </lineage>
</organism>
<accession>Q6PN86</accession>
<sequence length="64" mass="7406">MRCVPVFVILLLLIASAPSVDARLKTKDDMPLPSSHANIKRTLQIHRNKRCCPGWELCCEWDEW</sequence>
<protein>
    <recommendedName>
        <fullName evidence="3">Conotoxin mr5.1a</fullName>
    </recommendedName>
</protein>
<feature type="signal peptide" evidence="2">
    <location>
        <begin position="1"/>
        <end position="19"/>
    </location>
</feature>
<feature type="propeptide" id="PRO_0000035029">
    <location>
        <begin position="20"/>
        <end position="48"/>
    </location>
</feature>
<feature type="peptide" id="PRO_0000035030" description="Conotoxin mr5.1a">
    <location>
        <begin position="51"/>
        <end position="64"/>
    </location>
</feature>
<feature type="modified residue" description="4-carboxyglutamate" evidence="1">
    <location>
        <position position="60"/>
    </location>
</feature>
<name>CT51A_CONMR</name>
<proteinExistence type="evidence at transcript level"/>
<reference key="1">
    <citation type="journal article" date="2005" name="Toxicon">
        <title>Sequence diversity of T-superfamily conotoxins from Conus marmoreus.</title>
        <authorList>
            <person name="Han Y.-H."/>
            <person name="Wang Q."/>
            <person name="Jiang H."/>
            <person name="Miao X.-W."/>
            <person name="Chen J.-S."/>
            <person name="Chi C.-W."/>
        </authorList>
    </citation>
    <scope>NUCLEOTIDE SEQUENCE [MRNA]</scope>
    <source>
        <tissue>Venom duct</tissue>
    </source>
</reference>
<dbReference type="EMBL" id="AY591764">
    <property type="protein sequence ID" value="AAT01628.1"/>
    <property type="molecule type" value="mRNA"/>
</dbReference>
<dbReference type="ConoServer" id="855">
    <property type="toxin name" value="Mr5.1a precursor"/>
</dbReference>
<dbReference type="GO" id="GO:0005576">
    <property type="term" value="C:extracellular region"/>
    <property type="evidence" value="ECO:0007669"/>
    <property type="project" value="UniProtKB-SubCell"/>
</dbReference>
<dbReference type="GO" id="GO:0090729">
    <property type="term" value="F:toxin activity"/>
    <property type="evidence" value="ECO:0007669"/>
    <property type="project" value="UniProtKB-KW"/>
</dbReference>
<dbReference type="InterPro" id="IPR031565">
    <property type="entry name" value="T-conotoxin"/>
</dbReference>
<dbReference type="Pfam" id="PF16981">
    <property type="entry name" value="Chi-conotoxin"/>
    <property type="match status" value="1"/>
</dbReference>
<comment type="subcellular location">
    <subcellularLocation>
        <location evidence="1">Secreted</location>
    </subcellularLocation>
</comment>
<comment type="tissue specificity">
    <text>Expressed by the venom duct.</text>
</comment>
<comment type="domain">
    <text>The cysteine framework is V (CC-CC).</text>
</comment>
<comment type="PTM">
    <text evidence="4">Contains 2 disulfide bonds that can be either 'C1-C3, C2-C4' or 'C1-C4, C2-C3', since these disulfide connectivities have been observed for conotoxins with cysteine framework V (for examples, see AC P0DQQ7 and AC P81755).</text>
</comment>
<comment type="similarity">
    <text evidence="4">Belongs to the conotoxin T superfamily.</text>
</comment>
<keyword id="KW-0165">Cleavage on pair of basic residues</keyword>
<keyword id="KW-1015">Disulfide bond</keyword>
<keyword id="KW-0301">Gamma-carboxyglutamic acid</keyword>
<keyword id="KW-0964">Secreted</keyword>
<keyword id="KW-0732">Signal</keyword>
<keyword id="KW-0800">Toxin</keyword>
<evidence type="ECO:0000250" key="1"/>
<evidence type="ECO:0000255" key="2"/>
<evidence type="ECO:0000303" key="3">
    <source>
    </source>
</evidence>
<evidence type="ECO:0000305" key="4"/>